<feature type="chain" id="PRO_0000131918" description="Cytidylate kinase">
    <location>
        <begin position="1"/>
        <end position="218"/>
    </location>
</feature>
<feature type="binding site" evidence="1">
    <location>
        <begin position="10"/>
        <end position="18"/>
    </location>
    <ligand>
        <name>ATP</name>
        <dbReference type="ChEBI" id="CHEBI:30616"/>
    </ligand>
</feature>
<evidence type="ECO:0000255" key="1">
    <source>
        <dbReference type="HAMAP-Rule" id="MF_00238"/>
    </source>
</evidence>
<gene>
    <name evidence="1" type="primary">cmk</name>
    <name type="ordered locus">FN1607</name>
</gene>
<name>KCY_FUSNN</name>
<comment type="catalytic activity">
    <reaction evidence="1">
        <text>CMP + ATP = CDP + ADP</text>
        <dbReference type="Rhea" id="RHEA:11600"/>
        <dbReference type="ChEBI" id="CHEBI:30616"/>
        <dbReference type="ChEBI" id="CHEBI:58069"/>
        <dbReference type="ChEBI" id="CHEBI:60377"/>
        <dbReference type="ChEBI" id="CHEBI:456216"/>
        <dbReference type="EC" id="2.7.4.25"/>
    </reaction>
</comment>
<comment type="catalytic activity">
    <reaction evidence="1">
        <text>dCMP + ATP = dCDP + ADP</text>
        <dbReference type="Rhea" id="RHEA:25094"/>
        <dbReference type="ChEBI" id="CHEBI:30616"/>
        <dbReference type="ChEBI" id="CHEBI:57566"/>
        <dbReference type="ChEBI" id="CHEBI:58593"/>
        <dbReference type="ChEBI" id="CHEBI:456216"/>
        <dbReference type="EC" id="2.7.4.25"/>
    </reaction>
</comment>
<comment type="subcellular location">
    <subcellularLocation>
        <location evidence="1">Cytoplasm</location>
    </subcellularLocation>
</comment>
<comment type="similarity">
    <text evidence="1">Belongs to the cytidylate kinase family. Type 1 subfamily.</text>
</comment>
<protein>
    <recommendedName>
        <fullName evidence="1">Cytidylate kinase</fullName>
        <shortName evidence="1">CK</shortName>
        <ecNumber evidence="1">2.7.4.25</ecNumber>
    </recommendedName>
    <alternativeName>
        <fullName evidence="1">Cytidine monophosphate kinase</fullName>
        <shortName evidence="1">CMP kinase</shortName>
    </alternativeName>
</protein>
<dbReference type="EC" id="2.7.4.25" evidence="1"/>
<dbReference type="EMBL" id="AE009951">
    <property type="protein sequence ID" value="AAL93722.1"/>
    <property type="molecule type" value="Genomic_DNA"/>
</dbReference>
<dbReference type="RefSeq" id="NP_602423.1">
    <property type="nucleotide sequence ID" value="NC_003454.1"/>
</dbReference>
<dbReference type="RefSeq" id="WP_011015703.1">
    <property type="nucleotide sequence ID" value="NZ_OZ209243.1"/>
</dbReference>
<dbReference type="SMR" id="Q8RII8"/>
<dbReference type="FunCoup" id="Q8RII8">
    <property type="interactions" value="197"/>
</dbReference>
<dbReference type="STRING" id="190304.FN1607"/>
<dbReference type="PaxDb" id="190304-FN1607"/>
<dbReference type="EnsemblBacteria" id="AAL93722">
    <property type="protein sequence ID" value="AAL93722"/>
    <property type="gene ID" value="FN1607"/>
</dbReference>
<dbReference type="GeneID" id="79782546"/>
<dbReference type="KEGG" id="fnu:FN1607"/>
<dbReference type="PATRIC" id="fig|190304.8.peg.99"/>
<dbReference type="eggNOG" id="COG0283">
    <property type="taxonomic scope" value="Bacteria"/>
</dbReference>
<dbReference type="HOGENOM" id="CLU_079959_0_2_0"/>
<dbReference type="InParanoid" id="Q8RII8"/>
<dbReference type="BioCyc" id="FNUC190304:G1FZS-110-MONOMER"/>
<dbReference type="Proteomes" id="UP000002521">
    <property type="component" value="Chromosome"/>
</dbReference>
<dbReference type="GO" id="GO:0005829">
    <property type="term" value="C:cytosol"/>
    <property type="evidence" value="ECO:0000318"/>
    <property type="project" value="GO_Central"/>
</dbReference>
<dbReference type="GO" id="GO:0004127">
    <property type="term" value="F:(d)CMP kinase activity"/>
    <property type="evidence" value="ECO:0000318"/>
    <property type="project" value="GO_Central"/>
</dbReference>
<dbReference type="GO" id="GO:0005524">
    <property type="term" value="F:ATP binding"/>
    <property type="evidence" value="ECO:0007669"/>
    <property type="project" value="UniProtKB-UniRule"/>
</dbReference>
<dbReference type="GO" id="GO:0036430">
    <property type="term" value="F:CMP kinase activity"/>
    <property type="evidence" value="ECO:0007669"/>
    <property type="project" value="RHEA"/>
</dbReference>
<dbReference type="GO" id="GO:0036431">
    <property type="term" value="F:dCMP kinase activity"/>
    <property type="evidence" value="ECO:0007669"/>
    <property type="project" value="RHEA"/>
</dbReference>
<dbReference type="GO" id="GO:0015949">
    <property type="term" value="P:nucleobase-containing small molecule interconversion"/>
    <property type="evidence" value="ECO:0000318"/>
    <property type="project" value="GO_Central"/>
</dbReference>
<dbReference type="GO" id="GO:0006220">
    <property type="term" value="P:pyrimidine nucleotide metabolic process"/>
    <property type="evidence" value="ECO:0007669"/>
    <property type="project" value="UniProtKB-UniRule"/>
</dbReference>
<dbReference type="CDD" id="cd02020">
    <property type="entry name" value="CMPK"/>
    <property type="match status" value="1"/>
</dbReference>
<dbReference type="FunFam" id="3.40.50.300:FF:000484">
    <property type="entry name" value="Cytidylate kinase"/>
    <property type="match status" value="1"/>
</dbReference>
<dbReference type="Gene3D" id="3.40.50.300">
    <property type="entry name" value="P-loop containing nucleotide triphosphate hydrolases"/>
    <property type="match status" value="1"/>
</dbReference>
<dbReference type="HAMAP" id="MF_00238">
    <property type="entry name" value="Cytidyl_kinase_type1"/>
    <property type="match status" value="1"/>
</dbReference>
<dbReference type="InterPro" id="IPR003136">
    <property type="entry name" value="Cytidylate_kin"/>
</dbReference>
<dbReference type="InterPro" id="IPR011994">
    <property type="entry name" value="Cytidylate_kinase_dom"/>
</dbReference>
<dbReference type="InterPro" id="IPR027417">
    <property type="entry name" value="P-loop_NTPase"/>
</dbReference>
<dbReference type="NCBIfam" id="TIGR00017">
    <property type="entry name" value="cmk"/>
    <property type="match status" value="1"/>
</dbReference>
<dbReference type="PANTHER" id="PTHR21299:SF2">
    <property type="entry name" value="CYTIDYLATE KINASE"/>
    <property type="match status" value="1"/>
</dbReference>
<dbReference type="PANTHER" id="PTHR21299">
    <property type="entry name" value="CYTIDYLATE KINASE/PANTOATE-BETA-ALANINE LIGASE"/>
    <property type="match status" value="1"/>
</dbReference>
<dbReference type="Pfam" id="PF02224">
    <property type="entry name" value="Cytidylate_kin"/>
    <property type="match status" value="1"/>
</dbReference>
<dbReference type="SUPFAM" id="SSF52540">
    <property type="entry name" value="P-loop containing nucleoside triphosphate hydrolases"/>
    <property type="match status" value="1"/>
</dbReference>
<proteinExistence type="inferred from homology"/>
<accession>Q8RII8</accession>
<reference key="1">
    <citation type="journal article" date="2002" name="J. Bacteriol.">
        <title>Genome sequence and analysis of the oral bacterium Fusobacterium nucleatum strain ATCC 25586.</title>
        <authorList>
            <person name="Kapatral V."/>
            <person name="Anderson I."/>
            <person name="Ivanova N."/>
            <person name="Reznik G."/>
            <person name="Los T."/>
            <person name="Lykidis A."/>
            <person name="Bhattacharyya A."/>
            <person name="Bartman A."/>
            <person name="Gardner W."/>
            <person name="Grechkin G."/>
            <person name="Zhu L."/>
            <person name="Vasieva O."/>
            <person name="Chu L."/>
            <person name="Kogan Y."/>
            <person name="Chaga O."/>
            <person name="Goltsman E."/>
            <person name="Bernal A."/>
            <person name="Larsen N."/>
            <person name="D'Souza M."/>
            <person name="Walunas T."/>
            <person name="Pusch G."/>
            <person name="Haselkorn R."/>
            <person name="Fonstein M."/>
            <person name="Kyrpides N.C."/>
            <person name="Overbeek R."/>
        </authorList>
    </citation>
    <scope>NUCLEOTIDE SEQUENCE [LARGE SCALE GENOMIC DNA]</scope>
    <source>
        <strain>ATCC 25586 / DSM 15643 / BCRC 10681 / CIP 101130 / JCM 8532 / KCTC 2640 / LMG 13131 / VPI 4355</strain>
    </source>
</reference>
<sequence length="218" mass="25009">MDNIIVAIDGPAGSGKSTIAKLIAKKFNFTYIDTGAMYRMITLYLLENNINFDDLKEIEKALKNINLDMQGDKFYLNDVDVSTKIREKRINENVSKVASIKIVRDNLVNLQRKISNNKNVILDGRDIGTVVFPNAKVKIFLVAAAEERARRRYNEFLEKKVEITYDEVLKSLKERDYIDSTRKESPLKKADEAIELDTTNLTIEDVINFISKKIEKVK</sequence>
<organism>
    <name type="scientific">Fusobacterium nucleatum subsp. nucleatum (strain ATCC 25586 / DSM 15643 / BCRC 10681 / CIP 101130 / JCM 8532 / KCTC 2640 / LMG 13131 / VPI 4355)</name>
    <dbReference type="NCBI Taxonomy" id="190304"/>
    <lineage>
        <taxon>Bacteria</taxon>
        <taxon>Fusobacteriati</taxon>
        <taxon>Fusobacteriota</taxon>
        <taxon>Fusobacteriia</taxon>
        <taxon>Fusobacteriales</taxon>
        <taxon>Fusobacteriaceae</taxon>
        <taxon>Fusobacterium</taxon>
    </lineage>
</organism>
<keyword id="KW-0067">ATP-binding</keyword>
<keyword id="KW-0963">Cytoplasm</keyword>
<keyword id="KW-0418">Kinase</keyword>
<keyword id="KW-0547">Nucleotide-binding</keyword>
<keyword id="KW-1185">Reference proteome</keyword>
<keyword id="KW-0808">Transferase</keyword>